<protein>
    <recommendedName>
        <fullName evidence="1">Ribulose bisphosphate carboxylase large chain</fullName>
        <shortName evidence="1">RuBisCO large subunit</shortName>
        <ecNumber evidence="1">4.1.1.39</ecNumber>
    </recommendedName>
</protein>
<sequence length="468" mass="51829">VGFKXGVXEYKLTYYTPEXETKDTDILAAFRVTPQPGVPPEEAGXAVAAESSTGTWTTVWTDGLTSLDRYKGRCYHIEPVPGEADQYICYVAYPLDLFEEGSVTNMFTSIVGNVFGFKALRALRLEDLRIPPAYIKTFQGPPHGIQVERDKLNKYGRPLLGCTIKPKLGLSAKNYGRAVYECLRGGLDFTKDDENVNSQPFMRWRDRFLFCAEALYKAQAETGEIKGHYLNATAGTCEEMIKRAVFARELGVPIVMHDYLTGGFTANTSLAHYCRDNGLLLHIHRAMHAVIDRQKNHGIHFRVLAKALRMSGGDHIHAGTVVGKLEGERDITLGFVDLLRDDFIEKDRSRGIYFTQDWVSLPGVIPVASGGIHVWHMPALTEIFGDXSVLQFGGGTLGXPWGNAPGAVANRVALEACVKARNEGRDLAAEGNTIIREASKWSPELAAACEVWKEIKFEFAAVDTLDRE</sequence>
<geneLocation type="chloroplast"/>
<proteinExistence type="inferred from homology"/>
<keyword id="KW-0113">Calvin cycle</keyword>
<keyword id="KW-0120">Carbon dioxide fixation</keyword>
<keyword id="KW-0150">Chloroplast</keyword>
<keyword id="KW-1015">Disulfide bond</keyword>
<keyword id="KW-0456">Lyase</keyword>
<keyword id="KW-0460">Magnesium</keyword>
<keyword id="KW-0479">Metal-binding</keyword>
<keyword id="KW-0488">Methylation</keyword>
<keyword id="KW-0503">Monooxygenase</keyword>
<keyword id="KW-0560">Oxidoreductase</keyword>
<keyword id="KW-0601">Photorespiration</keyword>
<keyword id="KW-0602">Photosynthesis</keyword>
<keyword id="KW-0934">Plastid</keyword>
<dbReference type="EC" id="4.1.1.39" evidence="1"/>
<dbReference type="EMBL" id="AF102652">
    <property type="protein sequence ID" value="AAC72998.1"/>
    <property type="molecule type" value="Genomic_DNA"/>
</dbReference>
<dbReference type="GO" id="GO:0009507">
    <property type="term" value="C:chloroplast"/>
    <property type="evidence" value="ECO:0007669"/>
    <property type="project" value="UniProtKB-SubCell"/>
</dbReference>
<dbReference type="GO" id="GO:0000287">
    <property type="term" value="F:magnesium ion binding"/>
    <property type="evidence" value="ECO:0007669"/>
    <property type="project" value="InterPro"/>
</dbReference>
<dbReference type="GO" id="GO:0004497">
    <property type="term" value="F:monooxygenase activity"/>
    <property type="evidence" value="ECO:0007669"/>
    <property type="project" value="UniProtKB-KW"/>
</dbReference>
<dbReference type="GO" id="GO:0016984">
    <property type="term" value="F:ribulose-bisphosphate carboxylase activity"/>
    <property type="evidence" value="ECO:0007669"/>
    <property type="project" value="UniProtKB-EC"/>
</dbReference>
<dbReference type="GO" id="GO:0009853">
    <property type="term" value="P:photorespiration"/>
    <property type="evidence" value="ECO:0007669"/>
    <property type="project" value="UniProtKB-KW"/>
</dbReference>
<dbReference type="GO" id="GO:0019253">
    <property type="term" value="P:reductive pentose-phosphate cycle"/>
    <property type="evidence" value="ECO:0007669"/>
    <property type="project" value="UniProtKB-KW"/>
</dbReference>
<dbReference type="CDD" id="cd08212">
    <property type="entry name" value="RuBisCO_large_I"/>
    <property type="match status" value="1"/>
</dbReference>
<dbReference type="FunFam" id="3.20.20.110:FF:000001">
    <property type="entry name" value="Ribulose bisphosphate carboxylase large chain"/>
    <property type="match status" value="1"/>
</dbReference>
<dbReference type="FunFam" id="3.30.70.150:FF:000001">
    <property type="entry name" value="Ribulose bisphosphate carboxylase large chain"/>
    <property type="match status" value="1"/>
</dbReference>
<dbReference type="Gene3D" id="3.20.20.110">
    <property type="entry name" value="Ribulose bisphosphate carboxylase, large subunit, C-terminal domain"/>
    <property type="match status" value="1"/>
</dbReference>
<dbReference type="Gene3D" id="3.30.70.150">
    <property type="entry name" value="RuBisCO large subunit, N-terminal domain"/>
    <property type="match status" value="1"/>
</dbReference>
<dbReference type="HAMAP" id="MF_01338">
    <property type="entry name" value="RuBisCO_L_type1"/>
    <property type="match status" value="1"/>
</dbReference>
<dbReference type="InterPro" id="IPR033966">
    <property type="entry name" value="RuBisCO"/>
</dbReference>
<dbReference type="InterPro" id="IPR020878">
    <property type="entry name" value="RuBisCo_large_chain_AS"/>
</dbReference>
<dbReference type="InterPro" id="IPR000685">
    <property type="entry name" value="RuBisCO_lsu_C"/>
</dbReference>
<dbReference type="InterPro" id="IPR036376">
    <property type="entry name" value="RuBisCO_lsu_C_sf"/>
</dbReference>
<dbReference type="InterPro" id="IPR017443">
    <property type="entry name" value="RuBisCO_lsu_fd_N"/>
</dbReference>
<dbReference type="InterPro" id="IPR036422">
    <property type="entry name" value="RuBisCO_lsu_N_sf"/>
</dbReference>
<dbReference type="InterPro" id="IPR020888">
    <property type="entry name" value="RuBisCO_lsuI"/>
</dbReference>
<dbReference type="NCBIfam" id="NF003252">
    <property type="entry name" value="PRK04208.1"/>
    <property type="match status" value="1"/>
</dbReference>
<dbReference type="PANTHER" id="PTHR42704">
    <property type="entry name" value="RIBULOSE BISPHOSPHATE CARBOXYLASE"/>
    <property type="match status" value="1"/>
</dbReference>
<dbReference type="PANTHER" id="PTHR42704:SF15">
    <property type="entry name" value="RIBULOSE BISPHOSPHATE CARBOXYLASE LARGE CHAIN"/>
    <property type="match status" value="1"/>
</dbReference>
<dbReference type="Pfam" id="PF00016">
    <property type="entry name" value="RuBisCO_large"/>
    <property type="match status" value="1"/>
</dbReference>
<dbReference type="Pfam" id="PF02788">
    <property type="entry name" value="RuBisCO_large_N"/>
    <property type="match status" value="1"/>
</dbReference>
<dbReference type="SFLD" id="SFLDG01052">
    <property type="entry name" value="RuBisCO"/>
    <property type="match status" value="1"/>
</dbReference>
<dbReference type="SFLD" id="SFLDS00014">
    <property type="entry name" value="RuBisCO"/>
    <property type="match status" value="1"/>
</dbReference>
<dbReference type="SFLD" id="SFLDG00301">
    <property type="entry name" value="RuBisCO-like_proteins"/>
    <property type="match status" value="1"/>
</dbReference>
<dbReference type="SUPFAM" id="SSF51649">
    <property type="entry name" value="RuBisCo, C-terminal domain"/>
    <property type="match status" value="1"/>
</dbReference>
<dbReference type="SUPFAM" id="SSF54966">
    <property type="entry name" value="RuBisCO, large subunit, small (N-terminal) domain"/>
    <property type="match status" value="1"/>
</dbReference>
<dbReference type="PROSITE" id="PS00157">
    <property type="entry name" value="RUBISCO_LARGE"/>
    <property type="match status" value="1"/>
</dbReference>
<feature type="chain" id="PRO_0000062555" description="Ribulose bisphosphate carboxylase large chain">
    <location>
        <begin position="1" status="less than"/>
        <end position="468" status="greater than"/>
    </location>
</feature>
<feature type="active site" description="Proton acceptor" evidence="1">
    <location>
        <position position="165"/>
    </location>
</feature>
<feature type="active site" description="Proton acceptor" evidence="1">
    <location>
        <position position="284"/>
    </location>
</feature>
<feature type="binding site" description="in homodimeric partner" evidence="1">
    <location>
        <position position="113"/>
    </location>
    <ligand>
        <name>substrate</name>
    </ligand>
</feature>
<feature type="binding site" evidence="1">
    <location>
        <position position="163"/>
    </location>
    <ligand>
        <name>substrate</name>
    </ligand>
</feature>
<feature type="binding site" evidence="1">
    <location>
        <position position="167"/>
    </location>
    <ligand>
        <name>substrate</name>
    </ligand>
</feature>
<feature type="binding site" description="via carbamate group" evidence="1">
    <location>
        <position position="191"/>
    </location>
    <ligand>
        <name>Mg(2+)</name>
        <dbReference type="ChEBI" id="CHEBI:18420"/>
    </ligand>
</feature>
<feature type="binding site" evidence="1">
    <location>
        <position position="193"/>
    </location>
    <ligand>
        <name>Mg(2+)</name>
        <dbReference type="ChEBI" id="CHEBI:18420"/>
    </ligand>
</feature>
<feature type="binding site" evidence="1">
    <location>
        <position position="194"/>
    </location>
    <ligand>
        <name>Mg(2+)</name>
        <dbReference type="ChEBI" id="CHEBI:18420"/>
    </ligand>
</feature>
<feature type="binding site" evidence="1">
    <location>
        <position position="285"/>
    </location>
    <ligand>
        <name>substrate</name>
    </ligand>
</feature>
<feature type="binding site" evidence="1">
    <location>
        <position position="317"/>
    </location>
    <ligand>
        <name>substrate</name>
    </ligand>
</feature>
<feature type="binding site" evidence="1">
    <location>
        <position position="369"/>
    </location>
    <ligand>
        <name>substrate</name>
    </ligand>
</feature>
<feature type="site" description="Transition state stabilizer" evidence="1">
    <location>
        <position position="324"/>
    </location>
</feature>
<feature type="modified residue" description="N6,N6,N6-trimethyllysine" evidence="1">
    <location>
        <position position="4"/>
    </location>
</feature>
<feature type="modified residue" description="N6-carboxylysine" evidence="1">
    <location>
        <position position="191"/>
    </location>
</feature>
<feature type="disulfide bond" description="Interchain; in linked form" evidence="1">
    <location>
        <position position="237"/>
    </location>
</feature>
<feature type="non-terminal residue">
    <location>
        <position position="1"/>
    </location>
</feature>
<feature type="non-terminal residue">
    <location>
        <position position="468"/>
    </location>
</feature>
<reference key="1">
    <citation type="submission" date="1998-10" db="EMBL/GenBank/DDBJ databases">
        <title>Phylogenetic analysis of Bignoniaceae using the cpDNA sequences of rbcL and ndhF.</title>
        <authorList>
            <person name="Spangler R.E."/>
            <person name="Olmstead R.G."/>
        </authorList>
    </citation>
    <scope>NUCLEOTIDE SEQUENCE [GENOMIC DNA]</scope>
</reference>
<comment type="function">
    <text evidence="1">RuBisCO catalyzes two reactions: the carboxylation of D-ribulose 1,5-bisphosphate, the primary event in carbon dioxide fixation, as well as the oxidative fragmentation of the pentose substrate in the photorespiration process. Both reactions occur simultaneously and in competition at the same active site.</text>
</comment>
<comment type="catalytic activity">
    <reaction evidence="1">
        <text>2 (2R)-3-phosphoglycerate + 2 H(+) = D-ribulose 1,5-bisphosphate + CO2 + H2O</text>
        <dbReference type="Rhea" id="RHEA:23124"/>
        <dbReference type="ChEBI" id="CHEBI:15377"/>
        <dbReference type="ChEBI" id="CHEBI:15378"/>
        <dbReference type="ChEBI" id="CHEBI:16526"/>
        <dbReference type="ChEBI" id="CHEBI:57870"/>
        <dbReference type="ChEBI" id="CHEBI:58272"/>
        <dbReference type="EC" id="4.1.1.39"/>
    </reaction>
</comment>
<comment type="catalytic activity">
    <reaction evidence="1">
        <text>D-ribulose 1,5-bisphosphate + O2 = 2-phosphoglycolate + (2R)-3-phosphoglycerate + 2 H(+)</text>
        <dbReference type="Rhea" id="RHEA:36631"/>
        <dbReference type="ChEBI" id="CHEBI:15378"/>
        <dbReference type="ChEBI" id="CHEBI:15379"/>
        <dbReference type="ChEBI" id="CHEBI:57870"/>
        <dbReference type="ChEBI" id="CHEBI:58033"/>
        <dbReference type="ChEBI" id="CHEBI:58272"/>
    </reaction>
</comment>
<comment type="cofactor">
    <cofactor evidence="1">
        <name>Mg(2+)</name>
        <dbReference type="ChEBI" id="CHEBI:18420"/>
    </cofactor>
    <text evidence="1">Binds 1 Mg(2+) ion per subunit.</text>
</comment>
<comment type="subunit">
    <text evidence="1">Heterohexadecamer of 8 large chains and 8 small chains; disulfide-linked. The disulfide link is formed within the large subunit homodimers.</text>
</comment>
<comment type="subcellular location">
    <subcellularLocation>
        <location>Plastid</location>
        <location>Chloroplast</location>
    </subcellularLocation>
</comment>
<comment type="PTM">
    <text evidence="1">The disulfide bond which can form in the large chain dimeric partners within the hexadecamer appears to be associated with oxidative stress and protein turnover.</text>
</comment>
<comment type="miscellaneous">
    <text evidence="1">The basic functional RuBisCO is composed of a large chain homodimer in a 'head-to-tail' conformation. In form I RuBisCO this homodimer is arranged in a barrel-like tetramer with the small subunits forming a tetrameric 'cap' on each end of the 'barrel'.</text>
</comment>
<comment type="similarity">
    <text evidence="1">Belongs to the RuBisCO large chain family. Type I subfamily.</text>
</comment>
<accession>O98668</accession>
<gene>
    <name evidence="1" type="primary">rbcL</name>
</gene>
<organism>
    <name type="scientific">Pandorea jasminoides</name>
    <name type="common">Bower vine</name>
    <dbReference type="NCBI Taxonomy" id="83953"/>
    <lineage>
        <taxon>Eukaryota</taxon>
        <taxon>Viridiplantae</taxon>
        <taxon>Streptophyta</taxon>
        <taxon>Embryophyta</taxon>
        <taxon>Tracheophyta</taxon>
        <taxon>Spermatophyta</taxon>
        <taxon>Magnoliopsida</taxon>
        <taxon>eudicotyledons</taxon>
        <taxon>Gunneridae</taxon>
        <taxon>Pentapetalae</taxon>
        <taxon>asterids</taxon>
        <taxon>lamiids</taxon>
        <taxon>Lamiales</taxon>
        <taxon>Bignoniaceae</taxon>
        <taxon>Tecomeae</taxon>
        <taxon>Pandorea</taxon>
    </lineage>
</organism>
<name>RBL_PANJS</name>
<evidence type="ECO:0000255" key="1">
    <source>
        <dbReference type="HAMAP-Rule" id="MF_01338"/>
    </source>
</evidence>